<proteinExistence type="inferred from homology"/>
<sequence length="431" mass="46825">MRSYERSKAAYAEAVKLMPGGVNSPVRAFKAVKMDPIFMARGKGSKIYDIDGNEYIDYVLSWGPLILGHANDQVVEALKRVAETGTSFGAPTLIENELAKLVMERMPSIEIIRMVSSGTEATMSALRLARGYTGRNKIVKFEGCYHGHGDSLLIKAGSGVATLGLPDSPGVPETVAQHTITVPYNDLQSVRYAFEKFGEDIAAVIVEPVAGNMGVVPPEPGFLQGLRDVTNEYGALLIFDEVMTGFRVDYYSGQGYYGVTPDLTCLGKVIGGGLPVGAYGGRADIMEKIAPSGPIYQAGTLSGNPMAMTAGYETLRQLTPETYEAFKKKANRLAEGLSEAAKAYHIPHTINQAGSMIGMFFTNERVTNYETAKTSNLDLFARYYQEMANEGIFLPPSQFEGMFLSTAHTDEDIEKTIEAARRAFAKMSDCL</sequence>
<comment type="catalytic activity">
    <reaction evidence="1">
        <text>(S)-4-amino-5-oxopentanoate = 5-aminolevulinate</text>
        <dbReference type="Rhea" id="RHEA:14265"/>
        <dbReference type="ChEBI" id="CHEBI:57501"/>
        <dbReference type="ChEBI" id="CHEBI:356416"/>
        <dbReference type="EC" id="5.4.3.8"/>
    </reaction>
</comment>
<comment type="cofactor">
    <cofactor evidence="1">
        <name>pyridoxal 5'-phosphate</name>
        <dbReference type="ChEBI" id="CHEBI:597326"/>
    </cofactor>
</comment>
<comment type="pathway">
    <text evidence="1">Porphyrin-containing compound metabolism; protoporphyrin-IX biosynthesis; 5-aminolevulinate from L-glutamyl-tRNA(Glu): step 2/2.</text>
</comment>
<comment type="subunit">
    <text evidence="1">Homodimer.</text>
</comment>
<comment type="subcellular location">
    <subcellularLocation>
        <location evidence="1">Cytoplasm</location>
    </subcellularLocation>
</comment>
<comment type="similarity">
    <text evidence="1">Belongs to the class-III pyridoxal-phosphate-dependent aminotransferase family. HemL subfamily.</text>
</comment>
<comment type="sequence caution" evidence="2">
    <conflict type="erroneous initiation">
        <sequence resource="EMBL-CDS" id="ACJ32991"/>
    </conflict>
</comment>
<gene>
    <name evidence="1" type="primary">hemL2</name>
    <name type="ordered locus">Aflv_0610</name>
</gene>
<accession>B7GH35</accession>
<dbReference type="EC" id="5.4.3.8" evidence="1"/>
<dbReference type="EMBL" id="CP000922">
    <property type="protein sequence ID" value="ACJ32991.1"/>
    <property type="status" value="ALT_INIT"/>
    <property type="molecule type" value="Genomic_DNA"/>
</dbReference>
<dbReference type="RefSeq" id="WP_041638006.1">
    <property type="nucleotide sequence ID" value="NC_011567.1"/>
</dbReference>
<dbReference type="SMR" id="B7GH35"/>
<dbReference type="STRING" id="491915.Aflv_0610"/>
<dbReference type="GeneID" id="7036867"/>
<dbReference type="KEGG" id="afl:Aflv_0610"/>
<dbReference type="PATRIC" id="fig|491915.6.peg.627"/>
<dbReference type="eggNOG" id="COG0001">
    <property type="taxonomic scope" value="Bacteria"/>
</dbReference>
<dbReference type="HOGENOM" id="CLU_016922_1_5_9"/>
<dbReference type="UniPathway" id="UPA00251">
    <property type="reaction ID" value="UER00317"/>
</dbReference>
<dbReference type="Proteomes" id="UP000000742">
    <property type="component" value="Chromosome"/>
</dbReference>
<dbReference type="GO" id="GO:0005737">
    <property type="term" value="C:cytoplasm"/>
    <property type="evidence" value="ECO:0007669"/>
    <property type="project" value="UniProtKB-SubCell"/>
</dbReference>
<dbReference type="GO" id="GO:0042286">
    <property type="term" value="F:glutamate-1-semialdehyde 2,1-aminomutase activity"/>
    <property type="evidence" value="ECO:0007669"/>
    <property type="project" value="UniProtKB-UniRule"/>
</dbReference>
<dbReference type="GO" id="GO:0030170">
    <property type="term" value="F:pyridoxal phosphate binding"/>
    <property type="evidence" value="ECO:0007669"/>
    <property type="project" value="InterPro"/>
</dbReference>
<dbReference type="GO" id="GO:0008483">
    <property type="term" value="F:transaminase activity"/>
    <property type="evidence" value="ECO:0007669"/>
    <property type="project" value="InterPro"/>
</dbReference>
<dbReference type="GO" id="GO:0006782">
    <property type="term" value="P:protoporphyrinogen IX biosynthetic process"/>
    <property type="evidence" value="ECO:0007669"/>
    <property type="project" value="UniProtKB-UniRule"/>
</dbReference>
<dbReference type="CDD" id="cd00610">
    <property type="entry name" value="OAT_like"/>
    <property type="match status" value="1"/>
</dbReference>
<dbReference type="FunFam" id="3.40.640.10:FF:000021">
    <property type="entry name" value="Glutamate-1-semialdehyde 2,1-aminomutase"/>
    <property type="match status" value="1"/>
</dbReference>
<dbReference type="Gene3D" id="3.90.1150.10">
    <property type="entry name" value="Aspartate Aminotransferase, domain 1"/>
    <property type="match status" value="1"/>
</dbReference>
<dbReference type="Gene3D" id="3.40.640.10">
    <property type="entry name" value="Type I PLP-dependent aspartate aminotransferase-like (Major domain)"/>
    <property type="match status" value="1"/>
</dbReference>
<dbReference type="HAMAP" id="MF_00375">
    <property type="entry name" value="HemL_aminotrans_3"/>
    <property type="match status" value="1"/>
</dbReference>
<dbReference type="InterPro" id="IPR004639">
    <property type="entry name" value="4pyrrol_synth_GluAld_NH2Trfase"/>
</dbReference>
<dbReference type="InterPro" id="IPR005814">
    <property type="entry name" value="Aminotrans_3"/>
</dbReference>
<dbReference type="InterPro" id="IPR049704">
    <property type="entry name" value="Aminotrans_3_PPA_site"/>
</dbReference>
<dbReference type="InterPro" id="IPR015424">
    <property type="entry name" value="PyrdxlP-dep_Trfase"/>
</dbReference>
<dbReference type="InterPro" id="IPR015421">
    <property type="entry name" value="PyrdxlP-dep_Trfase_major"/>
</dbReference>
<dbReference type="InterPro" id="IPR015422">
    <property type="entry name" value="PyrdxlP-dep_Trfase_small"/>
</dbReference>
<dbReference type="NCBIfam" id="TIGR00713">
    <property type="entry name" value="hemL"/>
    <property type="match status" value="1"/>
</dbReference>
<dbReference type="NCBIfam" id="NF000818">
    <property type="entry name" value="PRK00062.1"/>
    <property type="match status" value="1"/>
</dbReference>
<dbReference type="PANTHER" id="PTHR43713">
    <property type="entry name" value="GLUTAMATE-1-SEMIALDEHYDE 2,1-AMINOMUTASE"/>
    <property type="match status" value="1"/>
</dbReference>
<dbReference type="PANTHER" id="PTHR43713:SF3">
    <property type="entry name" value="GLUTAMATE-1-SEMIALDEHYDE 2,1-AMINOMUTASE 1, CHLOROPLASTIC-RELATED"/>
    <property type="match status" value="1"/>
</dbReference>
<dbReference type="Pfam" id="PF00202">
    <property type="entry name" value="Aminotran_3"/>
    <property type="match status" value="1"/>
</dbReference>
<dbReference type="SUPFAM" id="SSF53383">
    <property type="entry name" value="PLP-dependent transferases"/>
    <property type="match status" value="1"/>
</dbReference>
<dbReference type="PROSITE" id="PS00600">
    <property type="entry name" value="AA_TRANSFER_CLASS_3"/>
    <property type="match status" value="1"/>
</dbReference>
<protein>
    <recommendedName>
        <fullName evidence="1">Glutamate-1-semialdehyde 2,1-aminomutase 2</fullName>
        <shortName evidence="1">GSA 2</shortName>
        <ecNumber evidence="1">5.4.3.8</ecNumber>
    </recommendedName>
    <alternativeName>
        <fullName evidence="1">Glutamate-1-semialdehyde aminotransferase 2</fullName>
        <shortName evidence="1">GSA-AT 2</shortName>
    </alternativeName>
</protein>
<reference key="1">
    <citation type="journal article" date="2008" name="Genome Biol.">
        <title>Encapsulated in silica: genome, proteome and physiology of the thermophilic bacterium Anoxybacillus flavithermus WK1.</title>
        <authorList>
            <person name="Saw J.H."/>
            <person name="Mountain B.W."/>
            <person name="Feng L."/>
            <person name="Omelchenko M.V."/>
            <person name="Hou S."/>
            <person name="Saito J.A."/>
            <person name="Stott M.B."/>
            <person name="Li D."/>
            <person name="Zhao G."/>
            <person name="Wu J."/>
            <person name="Galperin M.Y."/>
            <person name="Koonin E.V."/>
            <person name="Makarova K.S."/>
            <person name="Wolf Y.I."/>
            <person name="Rigden D.J."/>
            <person name="Dunfield P.F."/>
            <person name="Wang L."/>
            <person name="Alam M."/>
        </authorList>
    </citation>
    <scope>NUCLEOTIDE SEQUENCE [LARGE SCALE GENOMIC DNA]</scope>
    <source>
        <strain>DSM 21510 / WK1</strain>
    </source>
</reference>
<feature type="chain" id="PRO_0000382251" description="Glutamate-1-semialdehyde 2,1-aminomutase 2">
    <location>
        <begin position="1"/>
        <end position="431"/>
    </location>
</feature>
<feature type="modified residue" description="N6-(pyridoxal phosphate)lysine" evidence="1">
    <location>
        <position position="268"/>
    </location>
</feature>
<evidence type="ECO:0000255" key="1">
    <source>
        <dbReference type="HAMAP-Rule" id="MF_00375"/>
    </source>
</evidence>
<evidence type="ECO:0000305" key="2"/>
<keyword id="KW-0963">Cytoplasm</keyword>
<keyword id="KW-0413">Isomerase</keyword>
<keyword id="KW-0627">Porphyrin biosynthesis</keyword>
<keyword id="KW-0663">Pyridoxal phosphate</keyword>
<organism>
    <name type="scientific">Anoxybacillus flavithermus (strain DSM 21510 / WK1)</name>
    <dbReference type="NCBI Taxonomy" id="491915"/>
    <lineage>
        <taxon>Bacteria</taxon>
        <taxon>Bacillati</taxon>
        <taxon>Bacillota</taxon>
        <taxon>Bacilli</taxon>
        <taxon>Bacillales</taxon>
        <taxon>Anoxybacillaceae</taxon>
        <taxon>Anoxybacillus</taxon>
    </lineage>
</organism>
<name>GSA2_ANOFW</name>